<feature type="chain" id="PRO_0000355548" description="Serpin B10">
    <location>
        <begin position="1"/>
        <end position="397"/>
    </location>
</feature>
<feature type="region of interest" description="Disordered" evidence="2">
    <location>
        <begin position="62"/>
        <end position="85"/>
    </location>
</feature>
<feature type="short sequence motif" description="Nuclear localization signal" evidence="1">
    <location>
        <begin position="74"/>
        <end position="77"/>
    </location>
</feature>
<feature type="compositionally biased region" description="Basic and acidic residues" evidence="2">
    <location>
        <begin position="70"/>
        <end position="79"/>
    </location>
</feature>
<feature type="site" description="Reactive bond" evidence="1">
    <location>
        <begin position="362"/>
        <end position="363"/>
    </location>
</feature>
<evidence type="ECO:0000250" key="1"/>
<evidence type="ECO:0000256" key="2">
    <source>
        <dbReference type="SAM" id="MobiDB-lite"/>
    </source>
</evidence>
<evidence type="ECO:0000305" key="3"/>
<dbReference type="EMBL" id="DP000514">
    <property type="protein sequence ID" value="ABX89278.1"/>
    <property type="molecule type" value="Genomic_DNA"/>
</dbReference>
<dbReference type="RefSeq" id="NP_001162388.1">
    <property type="nucleotide sequence ID" value="NM_001168917.1"/>
</dbReference>
<dbReference type="RefSeq" id="XP_009191138.2">
    <property type="nucleotide sequence ID" value="XM_009192874.4"/>
</dbReference>
<dbReference type="SMR" id="A9RA96"/>
<dbReference type="STRING" id="9555.ENSPANP00000000198"/>
<dbReference type="MEROPS" id="I04.015"/>
<dbReference type="Ensembl" id="ENSPANT00000007415.3">
    <property type="protein sequence ID" value="ENSPANP00000000198.2"/>
    <property type="gene ID" value="ENSPANG00000009799.3"/>
</dbReference>
<dbReference type="GeneID" id="100137382"/>
<dbReference type="KEGG" id="panu:100137382"/>
<dbReference type="CTD" id="5273"/>
<dbReference type="eggNOG" id="KOG2392">
    <property type="taxonomic scope" value="Eukaryota"/>
</dbReference>
<dbReference type="GeneTree" id="ENSGT00940000161205"/>
<dbReference type="OMA" id="THEDMME"/>
<dbReference type="Proteomes" id="UP000028761">
    <property type="component" value="Chromosome 19"/>
</dbReference>
<dbReference type="GO" id="GO:0005829">
    <property type="term" value="C:cytosol"/>
    <property type="evidence" value="ECO:0007669"/>
    <property type="project" value="Ensembl"/>
</dbReference>
<dbReference type="GO" id="GO:0005615">
    <property type="term" value="C:extracellular space"/>
    <property type="evidence" value="ECO:0007669"/>
    <property type="project" value="InterPro"/>
</dbReference>
<dbReference type="GO" id="GO:0005654">
    <property type="term" value="C:nucleoplasm"/>
    <property type="evidence" value="ECO:0007669"/>
    <property type="project" value="Ensembl"/>
</dbReference>
<dbReference type="GO" id="GO:0004867">
    <property type="term" value="F:serine-type endopeptidase inhibitor activity"/>
    <property type="evidence" value="ECO:0007669"/>
    <property type="project" value="UniProtKB-KW"/>
</dbReference>
<dbReference type="CDD" id="cd19569">
    <property type="entry name" value="serpinB10_bomapin"/>
    <property type="match status" value="1"/>
</dbReference>
<dbReference type="FunFam" id="3.30.497.10:FF:000004">
    <property type="entry name" value="Serpin family B member 1"/>
    <property type="match status" value="1"/>
</dbReference>
<dbReference type="FunFam" id="2.30.39.10:FF:000001">
    <property type="entry name" value="Serpin family B member 2"/>
    <property type="match status" value="1"/>
</dbReference>
<dbReference type="Gene3D" id="2.30.39.10">
    <property type="entry name" value="Alpha-1-antitrypsin, domain 1"/>
    <property type="match status" value="1"/>
</dbReference>
<dbReference type="Gene3D" id="3.30.497.10">
    <property type="entry name" value="Antithrombin, subunit I, domain 2"/>
    <property type="match status" value="1"/>
</dbReference>
<dbReference type="InterPro" id="IPR023795">
    <property type="entry name" value="Serpin_CS"/>
</dbReference>
<dbReference type="InterPro" id="IPR023796">
    <property type="entry name" value="Serpin_dom"/>
</dbReference>
<dbReference type="InterPro" id="IPR000215">
    <property type="entry name" value="Serpin_fam"/>
</dbReference>
<dbReference type="InterPro" id="IPR036186">
    <property type="entry name" value="Serpin_sf"/>
</dbReference>
<dbReference type="InterPro" id="IPR042178">
    <property type="entry name" value="Serpin_sf_1"/>
</dbReference>
<dbReference type="InterPro" id="IPR042185">
    <property type="entry name" value="Serpin_sf_2"/>
</dbReference>
<dbReference type="PANTHER" id="PTHR11461">
    <property type="entry name" value="SERINE PROTEASE INHIBITOR, SERPIN"/>
    <property type="match status" value="1"/>
</dbReference>
<dbReference type="PANTHER" id="PTHR11461:SF175">
    <property type="entry name" value="SERPIN B10"/>
    <property type="match status" value="1"/>
</dbReference>
<dbReference type="Pfam" id="PF00079">
    <property type="entry name" value="Serpin"/>
    <property type="match status" value="1"/>
</dbReference>
<dbReference type="SMART" id="SM00093">
    <property type="entry name" value="SERPIN"/>
    <property type="match status" value="1"/>
</dbReference>
<dbReference type="SUPFAM" id="SSF56574">
    <property type="entry name" value="Serpins"/>
    <property type="match status" value="1"/>
</dbReference>
<dbReference type="PROSITE" id="PS00284">
    <property type="entry name" value="SERPIN"/>
    <property type="match status" value="1"/>
</dbReference>
<gene>
    <name type="primary">SERPINB10</name>
</gene>
<proteinExistence type="inferred from homology"/>
<protein>
    <recommendedName>
        <fullName>Serpin B10</fullName>
    </recommendedName>
</protein>
<reference key="1">
    <citation type="submission" date="2007-12" db="EMBL/GenBank/DDBJ databases">
        <title>NISC comparative sequencing initiative.</title>
        <authorList>
            <person name="Antonellis A."/>
            <person name="Ayele K."/>
            <person name="Benjamin B."/>
            <person name="Blakesley R.W."/>
            <person name="Boakye A."/>
            <person name="Bouffard G.G."/>
            <person name="Brinkley C."/>
            <person name="Brooks S."/>
            <person name="Chu G."/>
            <person name="Coleman H."/>
            <person name="Engle J."/>
            <person name="Gestole M."/>
            <person name="Greene A."/>
            <person name="Guan X."/>
            <person name="Gupta J."/>
            <person name="Haghighi P."/>
            <person name="Han J."/>
            <person name="Hansen N."/>
            <person name="Ho S.-L."/>
            <person name="Hu P."/>
            <person name="Hunter G."/>
            <person name="Hurle B."/>
            <person name="Idol J.R."/>
            <person name="Kwong P."/>
            <person name="Laric P."/>
            <person name="Larson S."/>
            <person name="Lee-Lin S.-Q."/>
            <person name="Legaspi R."/>
            <person name="Madden M."/>
            <person name="Maduro Q.L."/>
            <person name="Maduro V.B."/>
            <person name="Margulies E.H."/>
            <person name="Masiello C."/>
            <person name="Maskeri B."/>
            <person name="McDowell J."/>
            <person name="Mojidi H.A."/>
            <person name="Mullikin J.C."/>
            <person name="Oestreicher J.S."/>
            <person name="Park M."/>
            <person name="Portnoy M.E."/>
            <person name="Prasad A."/>
            <person name="Puri O."/>
            <person name="Reddix-Dugue N."/>
            <person name="Schandler K."/>
            <person name="Schueler M.G."/>
            <person name="Sison C."/>
            <person name="Stantripop S."/>
            <person name="Stephen E."/>
            <person name="Taye A."/>
            <person name="Thomas J.W."/>
            <person name="Thomas P.J."/>
            <person name="Tsipouri V."/>
            <person name="Ung L."/>
            <person name="Vogt J.L."/>
            <person name="Wetherby K.D."/>
            <person name="Young A."/>
            <person name="Green E.D."/>
        </authorList>
    </citation>
    <scope>NUCLEOTIDE SEQUENCE [LARGE SCALE GENOMIC DNA]</scope>
</reference>
<organism>
    <name type="scientific">Papio anubis</name>
    <name type="common">Olive baboon</name>
    <dbReference type="NCBI Taxonomy" id="9555"/>
    <lineage>
        <taxon>Eukaryota</taxon>
        <taxon>Metazoa</taxon>
        <taxon>Chordata</taxon>
        <taxon>Craniata</taxon>
        <taxon>Vertebrata</taxon>
        <taxon>Euteleostomi</taxon>
        <taxon>Mammalia</taxon>
        <taxon>Eutheria</taxon>
        <taxon>Euarchontoglires</taxon>
        <taxon>Primates</taxon>
        <taxon>Haplorrhini</taxon>
        <taxon>Catarrhini</taxon>
        <taxon>Cercopithecidae</taxon>
        <taxon>Cercopithecinae</taxon>
        <taxon>Papio</taxon>
    </lineage>
</organism>
<accession>A9RA96</accession>
<comment type="function">
    <text evidence="1">Protease inhibitor that may play a role in the regulation of protease activities during hematopoiesis and apoptosis induced by TNF. May regulate protease activities in the cytoplasm and in the nucleus (By similarity).</text>
</comment>
<comment type="subcellular location">
    <subcellularLocation>
        <location evidence="1">Nucleus</location>
    </subcellularLocation>
    <subcellularLocation>
        <location evidence="1">Cytoplasm</location>
    </subcellularLocation>
</comment>
<comment type="similarity">
    <text evidence="3">Belongs to the serpin family. Ov-serpin subfamily.</text>
</comment>
<keyword id="KW-0963">Cytoplasm</keyword>
<keyword id="KW-0539">Nucleus</keyword>
<keyword id="KW-0646">Protease inhibitor</keyword>
<keyword id="KW-1185">Reference proteome</keyword>
<keyword id="KW-0722">Serine protease inhibitor</keyword>
<name>SPB10_PAPAN</name>
<sequence length="397" mass="45383">MDTLATSINQFALELSKKLAESAQGKNIFFSSWSISTSLAMVYLGTKGTTAAQMGQVLQFNRDQGVKSSPESEKKRKMEFNSSNSEEIHSDFHTLISEILKPNDDYLLKTANAIYGEKTYPFHNKYLEDMKTYFGAEPQSVNFVEASDQIRKEINSWVERQTEGKIQNLLPDDSVDSTTRMILVNALYFKGIWEHQFLVQNTTEKPFRINETTSKPVQMMFMKKKLQIFHIEKPQAVGLQLYYKSRDLSLLILLPEDINGLVQLEKDITYEKLNEWTSADMMELYEVQLHLPKFKLEDSYDLKSTLSSMGMSDAFSQSKADFSGMSSARNLFLSNVFHKAFVEINEQGTEAAAGTGSEIESRIRVPSIEFNANHPFLFFIRHNKTNSILFYGRLCSP</sequence>